<keyword id="KW-0067">ATP-binding</keyword>
<keyword id="KW-0963">Cytoplasm</keyword>
<keyword id="KW-0418">Kinase</keyword>
<keyword id="KW-0520">NAD</keyword>
<keyword id="KW-0521">NADP</keyword>
<keyword id="KW-0547">Nucleotide-binding</keyword>
<keyword id="KW-0808">Transferase</keyword>
<protein>
    <recommendedName>
        <fullName evidence="1">NAD kinase</fullName>
        <ecNumber evidence="1">2.7.1.23</ecNumber>
    </recommendedName>
    <alternativeName>
        <fullName evidence="1">ATP-dependent NAD kinase</fullName>
    </alternativeName>
</protein>
<comment type="function">
    <text evidence="1">Involved in the regulation of the intracellular balance of NAD and NADP, and is a key enzyme in the biosynthesis of NADP. Catalyzes specifically the phosphorylation on 2'-hydroxyl of the adenosine moiety of NAD to yield NADP.</text>
</comment>
<comment type="catalytic activity">
    <reaction evidence="1">
        <text>NAD(+) + ATP = ADP + NADP(+) + H(+)</text>
        <dbReference type="Rhea" id="RHEA:18629"/>
        <dbReference type="ChEBI" id="CHEBI:15378"/>
        <dbReference type="ChEBI" id="CHEBI:30616"/>
        <dbReference type="ChEBI" id="CHEBI:57540"/>
        <dbReference type="ChEBI" id="CHEBI:58349"/>
        <dbReference type="ChEBI" id="CHEBI:456216"/>
        <dbReference type="EC" id="2.7.1.23"/>
    </reaction>
</comment>
<comment type="cofactor">
    <cofactor evidence="1">
        <name>a divalent metal cation</name>
        <dbReference type="ChEBI" id="CHEBI:60240"/>
    </cofactor>
</comment>
<comment type="subcellular location">
    <subcellularLocation>
        <location evidence="1">Cytoplasm</location>
    </subcellularLocation>
</comment>
<comment type="similarity">
    <text evidence="1">Belongs to the NAD kinase family.</text>
</comment>
<proteinExistence type="inferred from homology"/>
<evidence type="ECO:0000255" key="1">
    <source>
        <dbReference type="HAMAP-Rule" id="MF_00361"/>
    </source>
</evidence>
<accession>Q1JBT2</accession>
<sequence>MMTQMNYTGKVKRVAIIANGKYQSKRVASKLFSVFKDDPDFYLSKKNPDIVISIGGDGMLLSAFHMYEKELDKVRFVGIHTGHLGFYTDYRDFEVDKLIDNLRKDKGEQISYPILKVAITLDDGRVVKARALNEATVKRIEKTMVADVIINHVKFESFRGDGISVSTPTGSTAYNKSLGGAVLHPTIEALQLTEISSLNNRVFRTLGSSIIIPKKDKIELVPKRLGIYTISIDNKTYQLKNVTKVEYFIDDEKIHFVSSPSHTSFWERVKDAFIGETDS</sequence>
<gene>
    <name evidence="1" type="primary">nadK</name>
    <name type="ordered locus">MGAS2096_Spy0924</name>
</gene>
<dbReference type="EC" id="2.7.1.23" evidence="1"/>
<dbReference type="EMBL" id="CP000261">
    <property type="protein sequence ID" value="ABF35976.1"/>
    <property type="molecule type" value="Genomic_DNA"/>
</dbReference>
<dbReference type="SMR" id="Q1JBT2"/>
<dbReference type="KEGG" id="spj:MGAS2096_Spy0924"/>
<dbReference type="HOGENOM" id="CLU_008831_0_3_9"/>
<dbReference type="GO" id="GO:0005737">
    <property type="term" value="C:cytoplasm"/>
    <property type="evidence" value="ECO:0007669"/>
    <property type="project" value="UniProtKB-SubCell"/>
</dbReference>
<dbReference type="GO" id="GO:0005524">
    <property type="term" value="F:ATP binding"/>
    <property type="evidence" value="ECO:0007669"/>
    <property type="project" value="UniProtKB-KW"/>
</dbReference>
<dbReference type="GO" id="GO:0046872">
    <property type="term" value="F:metal ion binding"/>
    <property type="evidence" value="ECO:0007669"/>
    <property type="project" value="UniProtKB-UniRule"/>
</dbReference>
<dbReference type="GO" id="GO:0051287">
    <property type="term" value="F:NAD binding"/>
    <property type="evidence" value="ECO:0007669"/>
    <property type="project" value="UniProtKB-ARBA"/>
</dbReference>
<dbReference type="GO" id="GO:0003951">
    <property type="term" value="F:NAD+ kinase activity"/>
    <property type="evidence" value="ECO:0007669"/>
    <property type="project" value="UniProtKB-UniRule"/>
</dbReference>
<dbReference type="GO" id="GO:0019674">
    <property type="term" value="P:NAD metabolic process"/>
    <property type="evidence" value="ECO:0007669"/>
    <property type="project" value="InterPro"/>
</dbReference>
<dbReference type="GO" id="GO:0006741">
    <property type="term" value="P:NADP biosynthetic process"/>
    <property type="evidence" value="ECO:0007669"/>
    <property type="project" value="UniProtKB-UniRule"/>
</dbReference>
<dbReference type="Gene3D" id="3.40.50.10330">
    <property type="entry name" value="Probable inorganic polyphosphate/atp-NAD kinase, domain 1"/>
    <property type="match status" value="1"/>
</dbReference>
<dbReference type="Gene3D" id="2.60.200.30">
    <property type="entry name" value="Probable inorganic polyphosphate/atp-NAD kinase, domain 2"/>
    <property type="match status" value="1"/>
</dbReference>
<dbReference type="HAMAP" id="MF_00361">
    <property type="entry name" value="NAD_kinase"/>
    <property type="match status" value="1"/>
</dbReference>
<dbReference type="InterPro" id="IPR017438">
    <property type="entry name" value="ATP-NAD_kinase_N"/>
</dbReference>
<dbReference type="InterPro" id="IPR017437">
    <property type="entry name" value="ATP-NAD_kinase_PpnK-typ_C"/>
</dbReference>
<dbReference type="InterPro" id="IPR016064">
    <property type="entry name" value="NAD/diacylglycerol_kinase_sf"/>
</dbReference>
<dbReference type="InterPro" id="IPR002504">
    <property type="entry name" value="NADK"/>
</dbReference>
<dbReference type="NCBIfam" id="NF003424">
    <property type="entry name" value="PRK04885.1"/>
    <property type="match status" value="1"/>
</dbReference>
<dbReference type="PANTHER" id="PTHR20275">
    <property type="entry name" value="NAD KINASE"/>
    <property type="match status" value="1"/>
</dbReference>
<dbReference type="PANTHER" id="PTHR20275:SF0">
    <property type="entry name" value="NAD KINASE"/>
    <property type="match status" value="1"/>
</dbReference>
<dbReference type="Pfam" id="PF01513">
    <property type="entry name" value="NAD_kinase"/>
    <property type="match status" value="1"/>
</dbReference>
<dbReference type="Pfam" id="PF20143">
    <property type="entry name" value="NAD_kinase_C"/>
    <property type="match status" value="1"/>
</dbReference>
<dbReference type="SUPFAM" id="SSF111331">
    <property type="entry name" value="NAD kinase/diacylglycerol kinase-like"/>
    <property type="match status" value="1"/>
</dbReference>
<organism>
    <name type="scientific">Streptococcus pyogenes serotype M12 (strain MGAS2096)</name>
    <dbReference type="NCBI Taxonomy" id="370553"/>
    <lineage>
        <taxon>Bacteria</taxon>
        <taxon>Bacillati</taxon>
        <taxon>Bacillota</taxon>
        <taxon>Bacilli</taxon>
        <taxon>Lactobacillales</taxon>
        <taxon>Streptococcaceae</taxon>
        <taxon>Streptococcus</taxon>
    </lineage>
</organism>
<reference key="1">
    <citation type="journal article" date="2006" name="Proc. Natl. Acad. Sci. U.S.A.">
        <title>Molecular genetic anatomy of inter- and intraserotype variation in the human bacterial pathogen group A Streptococcus.</title>
        <authorList>
            <person name="Beres S.B."/>
            <person name="Richter E.W."/>
            <person name="Nagiec M.J."/>
            <person name="Sumby P."/>
            <person name="Porcella S.F."/>
            <person name="DeLeo F.R."/>
            <person name="Musser J.M."/>
        </authorList>
    </citation>
    <scope>NUCLEOTIDE SEQUENCE [LARGE SCALE GENOMIC DNA]</scope>
    <source>
        <strain>MGAS2096</strain>
    </source>
</reference>
<feature type="chain" id="PRO_1000005448" description="NAD kinase">
    <location>
        <begin position="1"/>
        <end position="279"/>
    </location>
</feature>
<feature type="active site" description="Proton acceptor" evidence="1">
    <location>
        <position position="57"/>
    </location>
</feature>
<feature type="binding site" evidence="1">
    <location>
        <begin position="57"/>
        <end position="58"/>
    </location>
    <ligand>
        <name>NAD(+)</name>
        <dbReference type="ChEBI" id="CHEBI:57540"/>
    </ligand>
</feature>
<feature type="binding site" evidence="1">
    <location>
        <begin position="133"/>
        <end position="134"/>
    </location>
    <ligand>
        <name>NAD(+)</name>
        <dbReference type="ChEBI" id="CHEBI:57540"/>
    </ligand>
</feature>
<feature type="binding site" evidence="1">
    <location>
        <position position="159"/>
    </location>
    <ligand>
        <name>NAD(+)</name>
        <dbReference type="ChEBI" id="CHEBI:57540"/>
    </ligand>
</feature>
<feature type="binding site" evidence="1">
    <location>
        <position position="161"/>
    </location>
    <ligand>
        <name>NAD(+)</name>
        <dbReference type="ChEBI" id="CHEBI:57540"/>
    </ligand>
</feature>
<feature type="binding site" evidence="1">
    <location>
        <begin position="172"/>
        <end position="177"/>
    </location>
    <ligand>
        <name>NAD(+)</name>
        <dbReference type="ChEBI" id="CHEBI:57540"/>
    </ligand>
</feature>
<name>NADK_STRPB</name>